<feature type="chain" id="PRO_0000359144" description="Acetyl-coenzyme A carboxylase carboxyl transferase subunit beta, chloroplastic">
    <location>
        <begin position="1"/>
        <end position="480"/>
    </location>
</feature>
<feature type="domain" description="CoA carboxyltransferase N-terminal" evidence="3">
    <location>
        <begin position="212"/>
        <end position="480"/>
    </location>
</feature>
<feature type="zinc finger region" description="C4-type" evidence="2">
    <location>
        <begin position="216"/>
        <end position="238"/>
    </location>
</feature>
<feature type="binding site" evidence="2">
    <location>
        <position position="216"/>
    </location>
    <ligand>
        <name>Zn(2+)</name>
        <dbReference type="ChEBI" id="CHEBI:29105"/>
    </ligand>
</feature>
<feature type="binding site" evidence="2">
    <location>
        <position position="219"/>
    </location>
    <ligand>
        <name>Zn(2+)</name>
        <dbReference type="ChEBI" id="CHEBI:29105"/>
    </ligand>
</feature>
<feature type="binding site" evidence="2">
    <location>
        <position position="235"/>
    </location>
    <ligand>
        <name>Zn(2+)</name>
        <dbReference type="ChEBI" id="CHEBI:29105"/>
    </ligand>
</feature>
<feature type="binding site" evidence="2">
    <location>
        <position position="238"/>
    </location>
    <ligand>
        <name>Zn(2+)</name>
        <dbReference type="ChEBI" id="CHEBI:29105"/>
    </ligand>
</feature>
<geneLocation type="chloroplast"/>
<name>ACCD_ILLOL</name>
<dbReference type="EC" id="2.1.3.15" evidence="2"/>
<dbReference type="EMBL" id="EF380354">
    <property type="protein sequence ID" value="ABQ52528.1"/>
    <property type="molecule type" value="Genomic_DNA"/>
</dbReference>
<dbReference type="RefSeq" id="YP_001294279.1">
    <property type="nucleotide sequence ID" value="NC_009600.1"/>
</dbReference>
<dbReference type="SMR" id="A6MMV3"/>
<dbReference type="GeneID" id="5236795"/>
<dbReference type="UniPathway" id="UPA00655">
    <property type="reaction ID" value="UER00711"/>
</dbReference>
<dbReference type="GO" id="GO:0009317">
    <property type="term" value="C:acetyl-CoA carboxylase complex"/>
    <property type="evidence" value="ECO:0007669"/>
    <property type="project" value="InterPro"/>
</dbReference>
<dbReference type="GO" id="GO:0009570">
    <property type="term" value="C:chloroplast stroma"/>
    <property type="evidence" value="ECO:0007669"/>
    <property type="project" value="UniProtKB-SubCell"/>
</dbReference>
<dbReference type="GO" id="GO:0003989">
    <property type="term" value="F:acetyl-CoA carboxylase activity"/>
    <property type="evidence" value="ECO:0007669"/>
    <property type="project" value="InterPro"/>
</dbReference>
<dbReference type="GO" id="GO:0005524">
    <property type="term" value="F:ATP binding"/>
    <property type="evidence" value="ECO:0007669"/>
    <property type="project" value="UniProtKB-KW"/>
</dbReference>
<dbReference type="GO" id="GO:0016743">
    <property type="term" value="F:carboxyl- or carbamoyltransferase activity"/>
    <property type="evidence" value="ECO:0007669"/>
    <property type="project" value="UniProtKB-UniRule"/>
</dbReference>
<dbReference type="GO" id="GO:0008270">
    <property type="term" value="F:zinc ion binding"/>
    <property type="evidence" value="ECO:0007669"/>
    <property type="project" value="UniProtKB-UniRule"/>
</dbReference>
<dbReference type="GO" id="GO:0006633">
    <property type="term" value="P:fatty acid biosynthetic process"/>
    <property type="evidence" value="ECO:0007669"/>
    <property type="project" value="UniProtKB-KW"/>
</dbReference>
<dbReference type="GO" id="GO:2001295">
    <property type="term" value="P:malonyl-CoA biosynthetic process"/>
    <property type="evidence" value="ECO:0007669"/>
    <property type="project" value="UniProtKB-UniRule"/>
</dbReference>
<dbReference type="Gene3D" id="3.90.226.10">
    <property type="entry name" value="2-enoyl-CoA Hydratase, Chain A, domain 1"/>
    <property type="match status" value="1"/>
</dbReference>
<dbReference type="HAMAP" id="MF_01395">
    <property type="entry name" value="AcetylCoA_CT_beta"/>
    <property type="match status" value="1"/>
</dbReference>
<dbReference type="InterPro" id="IPR034733">
    <property type="entry name" value="AcCoA_carboxyl_beta"/>
</dbReference>
<dbReference type="InterPro" id="IPR000438">
    <property type="entry name" value="Acetyl_CoA_COase_Trfase_b_su"/>
</dbReference>
<dbReference type="InterPro" id="IPR029045">
    <property type="entry name" value="ClpP/crotonase-like_dom_sf"/>
</dbReference>
<dbReference type="InterPro" id="IPR011762">
    <property type="entry name" value="COA_CT_N"/>
</dbReference>
<dbReference type="NCBIfam" id="TIGR00515">
    <property type="entry name" value="accD"/>
    <property type="match status" value="1"/>
</dbReference>
<dbReference type="PANTHER" id="PTHR42995">
    <property type="entry name" value="ACETYL-COENZYME A CARBOXYLASE CARBOXYL TRANSFERASE SUBUNIT BETA, CHLOROPLASTIC"/>
    <property type="match status" value="1"/>
</dbReference>
<dbReference type="PANTHER" id="PTHR42995:SF5">
    <property type="entry name" value="ACETYL-COENZYME A CARBOXYLASE CARBOXYL TRANSFERASE SUBUNIT BETA, CHLOROPLASTIC"/>
    <property type="match status" value="1"/>
</dbReference>
<dbReference type="Pfam" id="PF01039">
    <property type="entry name" value="Carboxyl_trans"/>
    <property type="match status" value="1"/>
</dbReference>
<dbReference type="PRINTS" id="PR01070">
    <property type="entry name" value="ACCCTRFRASEB"/>
</dbReference>
<dbReference type="SUPFAM" id="SSF52096">
    <property type="entry name" value="ClpP/crotonase"/>
    <property type="match status" value="1"/>
</dbReference>
<dbReference type="PROSITE" id="PS50980">
    <property type="entry name" value="COA_CT_NTER"/>
    <property type="match status" value="1"/>
</dbReference>
<protein>
    <recommendedName>
        <fullName evidence="2">Acetyl-coenzyme A carboxylase carboxyl transferase subunit beta, chloroplastic</fullName>
        <shortName evidence="2">ACCase subunit beta</shortName>
        <shortName evidence="2">Acetyl-CoA carboxylase carboxyltransferase subunit beta</shortName>
        <ecNumber evidence="2">2.1.3.15</ecNumber>
    </recommendedName>
</protein>
<evidence type="ECO:0000250" key="1"/>
<evidence type="ECO:0000255" key="2">
    <source>
        <dbReference type="HAMAP-Rule" id="MF_01395"/>
    </source>
</evidence>
<evidence type="ECO:0000255" key="3">
    <source>
        <dbReference type="PROSITE-ProRule" id="PRU01136"/>
    </source>
</evidence>
<comment type="function">
    <text evidence="2">Component of the acetyl coenzyme A carboxylase (ACC) complex. Biotin carboxylase (BC) catalyzes the carboxylation of biotin on its carrier protein (BCCP) and then the CO(2) group is transferred by the transcarboxylase to acetyl-CoA to form malonyl-CoA.</text>
</comment>
<comment type="catalytic activity">
    <reaction evidence="2">
        <text>N(6)-carboxybiotinyl-L-lysyl-[protein] + acetyl-CoA = N(6)-biotinyl-L-lysyl-[protein] + malonyl-CoA</text>
        <dbReference type="Rhea" id="RHEA:54728"/>
        <dbReference type="Rhea" id="RHEA-COMP:10505"/>
        <dbReference type="Rhea" id="RHEA-COMP:10506"/>
        <dbReference type="ChEBI" id="CHEBI:57288"/>
        <dbReference type="ChEBI" id="CHEBI:57384"/>
        <dbReference type="ChEBI" id="CHEBI:83144"/>
        <dbReference type="ChEBI" id="CHEBI:83145"/>
        <dbReference type="EC" id="2.1.3.15"/>
    </reaction>
</comment>
<comment type="cofactor">
    <cofactor evidence="2">
        <name>Zn(2+)</name>
        <dbReference type="ChEBI" id="CHEBI:29105"/>
    </cofactor>
    <text evidence="2">Binds 1 zinc ion per subunit.</text>
</comment>
<comment type="pathway">
    <text evidence="2">Lipid metabolism; malonyl-CoA biosynthesis; malonyl-CoA from acetyl-CoA: step 1/1.</text>
</comment>
<comment type="subunit">
    <text evidence="1">Acetyl-CoA carboxylase is a heterohexamer composed of biotin carboxyl carrier protein, biotin carboxylase and 2 subunits each of ACCase subunit alpha and ACCase plastid-coded subunit beta (accD).</text>
</comment>
<comment type="subcellular location">
    <subcellularLocation>
        <location evidence="2">Plastid</location>
        <location evidence="2">Chloroplast stroma</location>
    </subcellularLocation>
</comment>
<comment type="similarity">
    <text evidence="2">Belongs to the AccD/PCCB family.</text>
</comment>
<proteinExistence type="inferred from homology"/>
<accession>A6MMV3</accession>
<sequence length="480" mass="54118">MEKWWFNSMLSNEELEHKCGLSKSADSLGPIGNASGSETPIINGIDKNIHSWSDNGSYSCSNVDHLFGVRDIWSFISDDTFLVRDSNGDSYSVYFDIENQIFEIHNDSYFLSELESAFSSYLNKRSFSSYLNSGPKSYNRNYDRYMYDTQYSWNNHINSCIDSYLHSEISIDSDIYSYICSESLSGSDSESSSIRTSINGSDFDINTKYGRLWVQCENCYGLNYQKFFRSKMNICERCGYYLKMSSSDRIELSIDPGTWDPMDEDMISMDPIEFHSEEEPYRDRIDFFQRTTGLTEAVQTGIGQLNGIPIAIGVMDFQFMGGSMGSVVGEKITRLIECATNRSLPVIIVCASGGARMQEGSLSLMQMAKISSALYNYQSNKKLFYVSILTSPTTGGVTASFGMLGDIIIAEPNAYIAFAGKRVIEQTLKKTIPEGSQAAEYLFHKGLFDLIVPRNPLKGVPSELFQLHGFFPLNQINKYK</sequence>
<reference key="1">
    <citation type="journal article" date="2007" name="Mol. Phylogenet. Evol.">
        <title>Phylogenetic and evolutionary implications of complete chloroplast genome sequences of four early-diverging angiosperms: Buxus (Buxaceae), Chloranthus (Chloranthaceae), Dioscorea (Dioscoreaceae), and Illicium (Schisandraceae).</title>
        <authorList>
            <person name="Hansen D.R."/>
            <person name="Dastidar S.G."/>
            <person name="Cai Z."/>
            <person name="Penaflor C."/>
            <person name="Kuehl J.V."/>
            <person name="Boore J.L."/>
            <person name="Jansen R.K."/>
        </authorList>
    </citation>
    <scope>NUCLEOTIDE SEQUENCE [LARGE SCALE GENOMIC DNA]</scope>
</reference>
<gene>
    <name evidence="2" type="primary">accD</name>
</gene>
<organism>
    <name type="scientific">Illicium oligandrum</name>
    <name type="common">Star anise</name>
    <dbReference type="NCBI Taxonomy" id="145286"/>
    <lineage>
        <taxon>Eukaryota</taxon>
        <taxon>Viridiplantae</taxon>
        <taxon>Streptophyta</taxon>
        <taxon>Embryophyta</taxon>
        <taxon>Tracheophyta</taxon>
        <taxon>Spermatophyta</taxon>
        <taxon>Magnoliopsida</taxon>
        <taxon>Austrobaileyales</taxon>
        <taxon>Schisandraceae</taxon>
        <taxon>Illicium</taxon>
    </lineage>
</organism>
<keyword id="KW-0067">ATP-binding</keyword>
<keyword id="KW-0150">Chloroplast</keyword>
<keyword id="KW-0275">Fatty acid biosynthesis</keyword>
<keyword id="KW-0276">Fatty acid metabolism</keyword>
<keyword id="KW-0444">Lipid biosynthesis</keyword>
<keyword id="KW-0443">Lipid metabolism</keyword>
<keyword id="KW-0479">Metal-binding</keyword>
<keyword id="KW-0547">Nucleotide-binding</keyword>
<keyword id="KW-0934">Plastid</keyword>
<keyword id="KW-0808">Transferase</keyword>
<keyword id="KW-0862">Zinc</keyword>
<keyword id="KW-0863">Zinc-finger</keyword>